<proteinExistence type="evidence at protein level"/>
<sequence>MSVKWTSVILLIQLSFCFSSGNCGKVLVWAAEYSHWMNIKTILDELIQRGHEVTVLASSASILFDPNNSSALKIEIYPTSLTKTELENFIMQQIKRWSDLPKDTFWLYFSQVQEIMSIFGDITRKFCKDVVSNKKFMKKVQESRFDVIFADAIFPCSELLAELFNIPFVYSLSFSPGYTFEKHSGGFIFPPSYVPVVMSELTDQMTFMERVKNMIYVLYFDFWFEIFDMKKWDQFYSEVLGRPTTLSETMGKADVWLIRNSWNFQFPYPLLPNVDFVGGLHCKPAKPLPKEMEDFVQSSGENGVVVFSLGSMVSNMTEERANVIASALAQIPQKVLWRFDGNKPDTLGLNTRLYKWIPQNDLLGHPKTRAFITHGGANGIYEAIYHGIPMVGIPLFADQPDNIAHMKARGAAVRVDFNTMSSTDLLNALKRVINDPSYKENVMKLSRIQHDQPVKPLDRAVFWIEFVMRHKGAKHLRVAAHDLTWFQYHSLDVIGFLLVCVATVIFIVTKCCLFCFWKFARKAKKGKND</sequence>
<feature type="signal peptide" evidence="1">
    <location>
        <begin position="1"/>
        <end position="23"/>
    </location>
</feature>
<feature type="chain" id="PRO_0000036031" description="UDP-glucuronosyltransferase 2B7">
    <location>
        <begin position="24"/>
        <end position="529"/>
    </location>
</feature>
<feature type="transmembrane region" description="Helical" evidence="2">
    <location>
        <begin position="493"/>
        <end position="509"/>
    </location>
</feature>
<feature type="binding site" evidence="22">
    <location>
        <begin position="373"/>
        <end position="379"/>
    </location>
    <ligand>
        <name>UDP-alpha-D-glucuronate</name>
        <dbReference type="ChEBI" id="CHEBI:58052"/>
    </ligand>
</feature>
<feature type="binding site" evidence="22">
    <location>
        <position position="398"/>
    </location>
    <ligand>
        <name>UDP-alpha-D-glucuronate</name>
        <dbReference type="ChEBI" id="CHEBI:58052"/>
    </ligand>
</feature>
<feature type="glycosylation site" description="N-linked (GlcNAc...) asparagine" evidence="2">
    <location>
        <position position="67"/>
    </location>
</feature>
<feature type="glycosylation site" description="N-linked (GlcNAc...) asparagine" evidence="13">
    <location>
        <position position="68"/>
    </location>
</feature>
<feature type="glycosylation site" description="N-linked (GlcNAc...) asparagine" evidence="2">
    <location>
        <position position="315"/>
    </location>
</feature>
<feature type="sequence variant" id="VAR_057327" description="In dbSNP:rs12233719.">
    <original>A</original>
    <variation>S</variation>
    <location>
        <position position="71"/>
    </location>
</feature>
<feature type="sequence variant" id="VAR_012342" description="In allele UGT2B7*1; dbSNP:rs7439366." evidence="4 15">
    <original>Y</original>
    <variation>H</variation>
    <location>
        <position position="268"/>
    </location>
</feature>
<feature type="sequence variant" id="VAR_057328" description="In dbSNP:rs35590824.">
    <original>N</original>
    <variation>S</variation>
    <location>
        <position position="378"/>
    </location>
</feature>
<feature type="mutagenesis site" description="Reduced androsterone, hyodeoxycholic acid and tetrachlorocatechol glucuronosyltransferase activities." evidence="8">
    <original>S</original>
    <variation>A</variation>
    <location>
        <position position="15"/>
    </location>
</feature>
<feature type="mutagenesis site" description="Reduced androsterone, hyodeoxycholic acid and tetrachlorocatechol glucuronosyltransferase activities." evidence="8">
    <original>H</original>
    <variation>A</variation>
    <location>
        <position position="35"/>
    </location>
</feature>
<feature type="mutagenesis site" description="Reduced androsterone and tetrachlorocatechol glucuronosyltransferase activities; abolished hyodeoxycholic acid glucuronosyltransferase activity." evidence="8">
    <original>D</original>
    <variation>A</variation>
    <location>
        <position position="151"/>
    </location>
</feature>
<feature type="mutagenesis site" description="Abolished androsterone glucuronosyltransferase activity; reduced hyodeoxycholic acid and tetrachlorocatechol glucuronosyltransferase activities." evidence="8">
    <original>D</original>
    <variation>N</variation>
    <location>
        <position position="151"/>
    </location>
</feature>
<feature type="mutagenesis site" description="Reduced androsterone, hyodeoxycholic acid and tetrachlorocatechol glucuronosyltransferase activities." evidence="8">
    <original>T</original>
    <variation>V</variation>
    <location>
        <position position="373"/>
    </location>
</feature>
<feature type="mutagenesis site" description="Abolished androsterone glucuronosyltransferase activity; reduced hyodeoxycholic acid and tetrachlorocatechol glucuronosyltransferase activities." evidence="8">
    <original>H</original>
    <variation>A</variation>
    <variation>E</variation>
    <location>
        <position position="374"/>
    </location>
</feature>
<feature type="mutagenesis site" description="Abolished androsterone glucuronosyltransferase activity; reduced hyodeoxycholic acid and tetrachlorocatechol glucuronosyltransferase activities." evidence="8">
    <original>N</original>
    <variation>A</variation>
    <location>
        <position position="378"/>
    </location>
</feature>
<feature type="mutagenesis site" description="Abolished androsterone glucuronosyltransferase activity; reduced hyodeoxycholic acid and tetrachlorocatechol glucuronosyltransferase activities." evidence="8">
    <original>G</original>
    <variation>D</variation>
    <location>
        <position position="379"/>
    </location>
</feature>
<feature type="mutagenesis site" description="Abolished androsterone glucuronosyltransferase activity; no change in hyodeoxycholic acid and tetrachlorocatechol glucuronosyltransferase activities." evidence="8">
    <original>G</original>
    <variation>S</variation>
    <location>
        <position position="379"/>
    </location>
</feature>
<feature type="mutagenesis site" description="Reduced androsterone, hyodeoxycholic acid and tetrachlorocatechol glucuronosyltransferase activities." evidence="8">
    <original>D</original>
    <variation>A</variation>
    <variation>N</variation>
    <location>
        <position position="398"/>
    </location>
</feature>
<feature type="mutagenesis site" description="Abolished androsterone, hyodeoxycholic acid and tetrachlorocatechol glucuronosyltransferase activities." evidence="8">
    <original>Q</original>
    <variation>A</variation>
    <location>
        <position position="399"/>
    </location>
</feature>
<feature type="helix" evidence="38">
    <location>
        <begin position="290"/>
        <end position="297"/>
    </location>
</feature>
<feature type="turn" evidence="38">
    <location>
        <begin position="298"/>
        <end position="302"/>
    </location>
</feature>
<feature type="strand" evidence="38">
    <location>
        <begin position="304"/>
        <end position="308"/>
    </location>
</feature>
<feature type="helix" evidence="38">
    <location>
        <begin position="318"/>
        <end position="328"/>
    </location>
</feature>
<feature type="strand" evidence="38">
    <location>
        <begin position="331"/>
        <end position="338"/>
    </location>
</feature>
<feature type="strand" evidence="38">
    <location>
        <begin position="351"/>
        <end position="356"/>
    </location>
</feature>
<feature type="helix" evidence="38">
    <location>
        <begin position="359"/>
        <end position="363"/>
    </location>
</feature>
<feature type="strand" evidence="38">
    <location>
        <begin position="368"/>
        <end position="373"/>
    </location>
</feature>
<feature type="helix" evidence="38">
    <location>
        <begin position="377"/>
        <end position="386"/>
    </location>
</feature>
<feature type="strand" evidence="38">
    <location>
        <begin position="390"/>
        <end position="392"/>
    </location>
</feature>
<feature type="helix" evidence="38">
    <location>
        <begin position="399"/>
        <end position="407"/>
    </location>
</feature>
<feature type="turn" evidence="38">
    <location>
        <begin position="408"/>
        <end position="410"/>
    </location>
</feature>
<feature type="strand" evidence="38">
    <location>
        <begin position="411"/>
        <end position="414"/>
    </location>
</feature>
<feature type="turn" evidence="38">
    <location>
        <begin position="417"/>
        <end position="419"/>
    </location>
</feature>
<feature type="helix" evidence="38">
    <location>
        <begin position="422"/>
        <end position="434"/>
    </location>
</feature>
<feature type="helix" evidence="38">
    <location>
        <begin position="436"/>
        <end position="445"/>
    </location>
</feature>
<feature type="turn" evidence="38">
    <location>
        <begin position="448"/>
        <end position="450"/>
    </location>
</feature>
<keyword id="KW-0002">3D-structure</keyword>
<keyword id="KW-0256">Endoplasmic reticulum</keyword>
<keyword id="KW-0325">Glycoprotein</keyword>
<keyword id="KW-0328">Glycosyltransferase</keyword>
<keyword id="KW-0443">Lipid metabolism</keyword>
<keyword id="KW-0472">Membrane</keyword>
<keyword id="KW-1267">Proteomics identification</keyword>
<keyword id="KW-1185">Reference proteome</keyword>
<keyword id="KW-0732">Signal</keyword>
<keyword id="KW-0753">Steroid metabolism</keyword>
<keyword id="KW-0808">Transferase</keyword>
<keyword id="KW-0812">Transmembrane</keyword>
<keyword id="KW-1133">Transmembrane helix</keyword>
<gene>
    <name evidence="37" type="primary">UGT2B7</name>
    <name type="synonym">UGTB2B9</name>
</gene>
<accession>P16662</accession>
<accession>B2R810</accession>
<accession>Q6GTW0</accession>
<evidence type="ECO:0000250" key="1"/>
<evidence type="ECO:0000255" key="2"/>
<evidence type="ECO:0000269" key="3">
    <source>
    </source>
</evidence>
<evidence type="ECO:0000269" key="4">
    <source>
    </source>
</evidence>
<evidence type="ECO:0000269" key="5">
    <source>
    </source>
</evidence>
<evidence type="ECO:0000269" key="6">
    <source>
    </source>
</evidence>
<evidence type="ECO:0000269" key="7">
    <source>
    </source>
</evidence>
<evidence type="ECO:0000269" key="8">
    <source>
    </source>
</evidence>
<evidence type="ECO:0000269" key="9">
    <source>
    </source>
</evidence>
<evidence type="ECO:0000269" key="10">
    <source>
    </source>
</evidence>
<evidence type="ECO:0000269" key="11">
    <source>
    </source>
</evidence>
<evidence type="ECO:0000269" key="12">
    <source>
    </source>
</evidence>
<evidence type="ECO:0000269" key="13">
    <source>
    </source>
</evidence>
<evidence type="ECO:0000269" key="14">
    <source>
    </source>
</evidence>
<evidence type="ECO:0000269" key="15">
    <source>
    </source>
</evidence>
<evidence type="ECO:0000269" key="16">
    <source>
    </source>
</evidence>
<evidence type="ECO:0000269" key="17">
    <source>
    </source>
</evidence>
<evidence type="ECO:0000269" key="18">
    <source>
    </source>
</evidence>
<evidence type="ECO:0000269" key="19">
    <source>
    </source>
</evidence>
<evidence type="ECO:0000303" key="20">
    <source>
    </source>
</evidence>
<evidence type="ECO:0000303" key="21">
    <source>
    </source>
</evidence>
<evidence type="ECO:0000305" key="22"/>
<evidence type="ECO:0000305" key="23">
    <source>
    </source>
</evidence>
<evidence type="ECO:0000305" key="24">
    <source>
    </source>
</evidence>
<evidence type="ECO:0000305" key="25">
    <source>
    </source>
</evidence>
<evidence type="ECO:0000305" key="26">
    <source>
    </source>
</evidence>
<evidence type="ECO:0000305" key="27">
    <source>
    </source>
</evidence>
<evidence type="ECO:0000305" key="28">
    <source>
    </source>
</evidence>
<evidence type="ECO:0000305" key="29">
    <source>
    </source>
</evidence>
<evidence type="ECO:0000305" key="30">
    <source>
    </source>
</evidence>
<evidence type="ECO:0000305" key="31">
    <source>
    </source>
</evidence>
<evidence type="ECO:0000305" key="32">
    <source>
    </source>
</evidence>
<evidence type="ECO:0000305" key="33">
    <source>
    </source>
</evidence>
<evidence type="ECO:0000305" key="34">
    <source>
    </source>
</evidence>
<evidence type="ECO:0000305" key="35">
    <source>
    </source>
</evidence>
<evidence type="ECO:0000305" key="36">
    <source>
    </source>
</evidence>
<evidence type="ECO:0000312" key="37">
    <source>
        <dbReference type="HGNC" id="HGNC:12554"/>
    </source>
</evidence>
<evidence type="ECO:0007829" key="38">
    <source>
        <dbReference type="PDB" id="2O6L"/>
    </source>
</evidence>
<protein>
    <recommendedName>
        <fullName evidence="21">UDP-glucuronosyltransferase 2B7</fullName>
        <shortName>UDPGT 2B7</shortName>
        <shortName evidence="20">UGT2B7</shortName>
        <ecNumber evidence="8 10 11 12 16 17 18">2.4.1.17</ecNumber>
    </recommendedName>
    <alternativeName>
        <fullName>3,4-catechol estrogen-specific UDPGT</fullName>
    </alternativeName>
    <alternativeName>
        <fullName>UDP-glucuronosyltransferase 2B9</fullName>
        <shortName>UDPGT 2B9</shortName>
    </alternativeName>
    <alternativeName>
        <fullName>UDPGTh-2</fullName>
    </alternativeName>
</protein>
<comment type="function">
    <text evidence="3 5 6 7 8 10 11 12 14 15 16 17 18 19">UDP-glucuronosyltransferase (UGT) that catalyzes phase II biotransformation reactions in which lipophilic substrates are conjugated with glucuronic acid to increase the metabolite's water solubility, thereby facilitating excretion into either the urine or bile (PubMed:10702251, PubMed:15470161, PubMed:15472229, PubMed:17442341, PubMed:18674515, PubMed:18719240, PubMed:19022937, PubMed:23288867, PubMed:23756265, PubMed:26220143, PubMed:15231852, PubMed:21422672, PubMed:38211441). Essential for the elimination and detoxification of drugs, xenobiotics and endogenous compounds (PubMed:15470161, PubMed:18674515, PubMed:23756265). Catalyzes the glucuronidation of endogenous steroid hormones such as androgens (epitestosterone, androsterone) and estrogens (estradiol, epiestradiol, estriol, catechol estrogens) (PubMed:15472229, PubMed:17442341, PubMed:18719240, PubMed:19022937, PubMed:2159463, PubMed:23288867, PubMed:26220143). Also regulates the levels of retinoic acid, a major metabolite of vitamin A involved in apoptosis, cellular growth and differentiation, and embryonic development (PubMed:10702251). Contributes to bile acid (BA) detoxification by catalyzing the glucuronidation of BA substrates, which are natural detergents for dietary lipids absorption (PubMed:23756265). Involved in the glucuronidation of arachidonic acid (AA) and AA-derived eicosanoids including 15-HETE, 20-HETE, PGE2, PGB1 and F2-isoprostanes (8-iso-PGF2alpha and 5-epi-5-F2t-IsoP) (PubMed:15231852, PubMed:38211441). Involved in the glucuronidation of the phytochemical ferulic acid at the phenolic or the carboxylic acid group (PubMed:21422672). Involved in the glucuronidation of the AGTR1 angiotensin receptor antagonist losartan, caderastan and zolarsatan, drugs which can inhibit the effect of angiotensin II (PubMed:18674515). Also metabolizes mycophenolate, an immunosuppressive agent (PubMed:15470161).</text>
</comment>
<comment type="catalytic activity">
    <reaction evidence="3 5 6 7 8 10 11 12 14 16 17 18 19">
        <text>glucuronate acceptor + UDP-alpha-D-glucuronate = acceptor beta-D-glucuronoside + UDP + H(+)</text>
        <dbReference type="Rhea" id="RHEA:21032"/>
        <dbReference type="ChEBI" id="CHEBI:15378"/>
        <dbReference type="ChEBI" id="CHEBI:58052"/>
        <dbReference type="ChEBI" id="CHEBI:58223"/>
        <dbReference type="ChEBI" id="CHEBI:132367"/>
        <dbReference type="ChEBI" id="CHEBI:132368"/>
        <dbReference type="EC" id="2.4.1.17"/>
    </reaction>
    <physiologicalReaction direction="left-to-right" evidence="23 24 25 26 27 29 30 31 32 33 34 35 36">
        <dbReference type="Rhea" id="RHEA:21033"/>
    </physiologicalReaction>
</comment>
<comment type="catalytic activity">
    <reaction evidence="11 16">
        <text>17alpha-estradiol + UDP-alpha-D-glucuronate = 17alpha-estradiol 17-O-(beta-D-glucuronate) + UDP + H(+)</text>
        <dbReference type="Rhea" id="RHEA:52872"/>
        <dbReference type="ChEBI" id="CHEBI:15378"/>
        <dbReference type="ChEBI" id="CHEBI:17160"/>
        <dbReference type="ChEBI" id="CHEBI:58052"/>
        <dbReference type="ChEBI" id="CHEBI:58223"/>
        <dbReference type="ChEBI" id="CHEBI:136642"/>
    </reaction>
    <physiologicalReaction direction="left-to-right" evidence="30 33">
        <dbReference type="Rhea" id="RHEA:52873"/>
    </physiologicalReaction>
</comment>
<comment type="catalytic activity">
    <reaction evidence="11">
        <text>17beta-estradiol + UDP-alpha-D-glucuronate = 17beta-estradiol 17-O-(beta-D-glucuronate) + UDP + H(+)</text>
        <dbReference type="Rhea" id="RHEA:52464"/>
        <dbReference type="ChEBI" id="CHEBI:15378"/>
        <dbReference type="ChEBI" id="CHEBI:16469"/>
        <dbReference type="ChEBI" id="CHEBI:58052"/>
        <dbReference type="ChEBI" id="CHEBI:58223"/>
        <dbReference type="ChEBI" id="CHEBI:82961"/>
    </reaction>
    <physiologicalReaction direction="left-to-right" evidence="30">
        <dbReference type="Rhea" id="RHEA:52465"/>
    </physiologicalReaction>
</comment>
<comment type="catalytic activity">
    <reaction evidence="7">
        <text>2-hydroxy-17beta-estradiol + UDP-alpha-D-glucuronate = 2-hydroxy-17beta-estradiol 3-O-(beta-D-glucuronate) + UDP + H(+)</text>
        <dbReference type="Rhea" id="RHEA:53004"/>
        <dbReference type="ChEBI" id="CHEBI:15378"/>
        <dbReference type="ChEBI" id="CHEBI:28744"/>
        <dbReference type="ChEBI" id="CHEBI:58052"/>
        <dbReference type="ChEBI" id="CHEBI:58223"/>
        <dbReference type="ChEBI" id="CHEBI:136931"/>
    </reaction>
    <physiologicalReaction direction="left-to-right" evidence="26">
        <dbReference type="Rhea" id="RHEA:53005"/>
    </physiologicalReaction>
</comment>
<comment type="catalytic activity">
    <reaction evidence="7">
        <text>4-hydroxy-17beta-estradiol + UDP-alpha-D-glucuronate = 17beta-estradiol 4-O-(beta-D-glucuronate) + UDP + H(+)</text>
        <dbReference type="Rhea" id="RHEA:53040"/>
        <dbReference type="ChEBI" id="CHEBI:15378"/>
        <dbReference type="ChEBI" id="CHEBI:58052"/>
        <dbReference type="ChEBI" id="CHEBI:58223"/>
        <dbReference type="ChEBI" id="CHEBI:62845"/>
        <dbReference type="ChEBI" id="CHEBI:136937"/>
    </reaction>
    <physiologicalReaction direction="left-to-right" evidence="26">
        <dbReference type="Rhea" id="RHEA:53041"/>
    </physiologicalReaction>
</comment>
<comment type="catalytic activity">
    <reaction evidence="7">
        <text>4-hydroxyestrone + UDP-alpha-D-glucuronate = estrone 4-O-(beta-D-glucuronate) + UDP + H(+)</text>
        <dbReference type="Rhea" id="RHEA:53060"/>
        <dbReference type="ChEBI" id="CHEBI:15378"/>
        <dbReference type="ChEBI" id="CHEBI:58052"/>
        <dbReference type="ChEBI" id="CHEBI:58223"/>
        <dbReference type="ChEBI" id="CHEBI:87602"/>
        <dbReference type="ChEBI" id="CHEBI:136970"/>
    </reaction>
    <physiologicalReaction direction="left-to-right" evidence="26">
        <dbReference type="Rhea" id="RHEA:53061"/>
    </physiologicalReaction>
</comment>
<comment type="catalytic activity">
    <reaction evidence="18">
        <text>16alpha-hydroxyestrone + UDP-alpha-D-glucuronate = 16alpha-hydroxyestrone 16-O-(beta-D-glucuronate) + UDP + H(+)</text>
        <dbReference type="Rhea" id="RHEA:52452"/>
        <dbReference type="ChEBI" id="CHEBI:776"/>
        <dbReference type="ChEBI" id="CHEBI:15378"/>
        <dbReference type="ChEBI" id="CHEBI:58052"/>
        <dbReference type="ChEBI" id="CHEBI:58223"/>
        <dbReference type="ChEBI" id="CHEBI:136636"/>
    </reaction>
    <physiologicalReaction direction="left-to-right" evidence="35">
        <dbReference type="Rhea" id="RHEA:52453"/>
    </physiologicalReaction>
</comment>
<comment type="catalytic activity">
    <reaction evidence="16">
        <text>16alpha,17beta-estriol + UDP-alpha-D-glucuronate = 16alpha,17beta-estriol 16-O-(beta-D-glucuronate) + UDP + H(+)</text>
        <dbReference type="Rhea" id="RHEA:52472"/>
        <dbReference type="ChEBI" id="CHEBI:15378"/>
        <dbReference type="ChEBI" id="CHEBI:27974"/>
        <dbReference type="ChEBI" id="CHEBI:58052"/>
        <dbReference type="ChEBI" id="CHEBI:58223"/>
        <dbReference type="ChEBI" id="CHEBI:136650"/>
    </reaction>
    <physiologicalReaction direction="left-to-right" evidence="33">
        <dbReference type="Rhea" id="RHEA:52473"/>
    </physiologicalReaction>
</comment>
<comment type="catalytic activity">
    <reaction evidence="16">
        <text>16beta,17beta-estriol + UDP-alpha-D-glucuronate = 16beta,17beta-estriol 16-O-(beta-D-glucuronate) + UDP + H(+)</text>
        <dbReference type="Rhea" id="RHEA:52880"/>
        <dbReference type="ChEBI" id="CHEBI:15378"/>
        <dbReference type="ChEBI" id="CHEBI:58052"/>
        <dbReference type="ChEBI" id="CHEBI:58223"/>
        <dbReference type="ChEBI" id="CHEBI:87620"/>
        <dbReference type="ChEBI" id="CHEBI:136886"/>
    </reaction>
    <physiologicalReaction direction="left-to-right" evidence="33">
        <dbReference type="Rhea" id="RHEA:52881"/>
    </physiologicalReaction>
</comment>
<comment type="catalytic activity">
    <reaction evidence="16">
        <text>16alpha,17alpha-estriol + UDP-alpha-D-glucuronate = 16alpha,17alpha-estriol 16-O-(beta-D-glucuronate) + UDP + H(+)</text>
        <dbReference type="Rhea" id="RHEA:52920"/>
        <dbReference type="ChEBI" id="CHEBI:15378"/>
        <dbReference type="ChEBI" id="CHEBI:42156"/>
        <dbReference type="ChEBI" id="CHEBI:58052"/>
        <dbReference type="ChEBI" id="CHEBI:58223"/>
        <dbReference type="ChEBI" id="CHEBI:136884"/>
    </reaction>
    <physiologicalReaction direction="left-to-right" evidence="33">
        <dbReference type="Rhea" id="RHEA:52921"/>
    </physiologicalReaction>
</comment>
<comment type="catalytic activity">
    <reaction evidence="16">
        <text>16alpha,17alpha-estriol + UDP-alpha-D-glucuronate = 16alpha,17alpha-estriol 17-O-(beta-D-glucuronate) + UDP + H(+)</text>
        <dbReference type="Rhea" id="RHEA:52916"/>
        <dbReference type="ChEBI" id="CHEBI:15378"/>
        <dbReference type="ChEBI" id="CHEBI:42156"/>
        <dbReference type="ChEBI" id="CHEBI:58052"/>
        <dbReference type="ChEBI" id="CHEBI:58223"/>
        <dbReference type="ChEBI" id="CHEBI:136883"/>
    </reaction>
    <physiologicalReaction direction="left-to-right" evidence="33">
        <dbReference type="Rhea" id="RHEA:52917"/>
    </physiologicalReaction>
</comment>
<comment type="catalytic activity">
    <reaction evidence="12">
        <text>epitestosterone + UDP-alpha-D-glucuronate = epitestosterone 17-O-(beta-D-glucuronate) + UDP + H(+)</text>
        <dbReference type="Rhea" id="RHEA:52568"/>
        <dbReference type="ChEBI" id="CHEBI:15378"/>
        <dbReference type="ChEBI" id="CHEBI:42534"/>
        <dbReference type="ChEBI" id="CHEBI:58052"/>
        <dbReference type="ChEBI" id="CHEBI:58223"/>
        <dbReference type="ChEBI" id="CHEBI:136673"/>
    </reaction>
    <physiologicalReaction direction="left-to-right" evidence="31">
        <dbReference type="Rhea" id="RHEA:52569"/>
    </physiologicalReaction>
</comment>
<comment type="catalytic activity">
    <reaction evidence="17">
        <text>hyodeoxycholate + UDP-alpha-D-glucuronate = hyodeoxycholate 6-O-(beta-D-glucuronate) + UDP + H(+)</text>
        <dbReference type="Rhea" id="RHEA:52964"/>
        <dbReference type="ChEBI" id="CHEBI:15378"/>
        <dbReference type="ChEBI" id="CHEBI:58052"/>
        <dbReference type="ChEBI" id="CHEBI:58223"/>
        <dbReference type="ChEBI" id="CHEBI:58875"/>
        <dbReference type="ChEBI" id="CHEBI:136905"/>
    </reaction>
    <physiologicalReaction direction="left-to-right" evidence="34">
        <dbReference type="Rhea" id="RHEA:52965"/>
    </physiologicalReaction>
</comment>
<comment type="catalytic activity">
    <reaction evidence="17">
        <text>hyocholate + UDP-alpha-D-glucuronate = hyocholate 6-O-(beta-D-glucuronate) + UDP + H(+)</text>
        <dbReference type="Rhea" id="RHEA:52968"/>
        <dbReference type="ChEBI" id="CHEBI:15378"/>
        <dbReference type="ChEBI" id="CHEBI:58052"/>
        <dbReference type="ChEBI" id="CHEBI:58223"/>
        <dbReference type="ChEBI" id="CHEBI:133661"/>
        <dbReference type="ChEBI" id="CHEBI:136906"/>
    </reaction>
    <physiologicalReaction direction="left-to-right" evidence="34">
        <dbReference type="Rhea" id="RHEA:52969"/>
    </physiologicalReaction>
</comment>
<comment type="catalytic activity">
    <reaction evidence="3">
        <text>all-trans-retinoate + UDP-alpha-D-glucuronate = all-trans-retinoyl-1-O-(beta-D-glucuronate) + UDP</text>
        <dbReference type="Rhea" id="RHEA:55768"/>
        <dbReference type="ChEBI" id="CHEBI:35291"/>
        <dbReference type="ChEBI" id="CHEBI:58052"/>
        <dbReference type="ChEBI" id="CHEBI:58223"/>
        <dbReference type="ChEBI" id="CHEBI:139181"/>
    </reaction>
    <physiologicalReaction direction="left-to-right" evidence="23">
        <dbReference type="Rhea" id="RHEA:55769"/>
    </physiologicalReaction>
</comment>
<comment type="catalytic activity">
    <reaction evidence="3">
        <text>all-trans-4-hydroxyretinoate + UDP-alpha-D-glucuronate = all-trans-4-hydroxy-4-O-(beta-D-glucuronide)-retinoate + UDP + H(+)</text>
        <dbReference type="Rhea" id="RHEA:55776"/>
        <dbReference type="ChEBI" id="CHEBI:15378"/>
        <dbReference type="ChEBI" id="CHEBI:58052"/>
        <dbReference type="ChEBI" id="CHEBI:58223"/>
        <dbReference type="ChEBI" id="CHEBI:134178"/>
        <dbReference type="ChEBI" id="CHEBI:139182"/>
    </reaction>
    <physiologicalReaction direction="left-to-right" evidence="23">
        <dbReference type="Rhea" id="RHEA:55777"/>
    </physiologicalReaction>
</comment>
<comment type="catalytic activity">
    <reaction evidence="14">
        <text>(E)-ferulate + UDP-alpha-D-glucuronate = (E)-ferulic acid beta-D-glucuronate ester + UDP</text>
        <dbReference type="Rhea" id="RHEA:79955"/>
        <dbReference type="ChEBI" id="CHEBI:29749"/>
        <dbReference type="ChEBI" id="CHEBI:58052"/>
        <dbReference type="ChEBI" id="CHEBI:58223"/>
        <dbReference type="ChEBI" id="CHEBI:231332"/>
    </reaction>
    <physiologicalReaction direction="left-to-right" evidence="32">
        <dbReference type="Rhea" id="RHEA:79956"/>
    </physiologicalReaction>
</comment>
<comment type="catalytic activity">
    <reaction evidence="19">
        <text>8-iso-prostaglandin F2alpha + UDP-alpha-D-glucuronate = 8-iso-prostaglandin F2alpha-glucuronide + UDP + H(+)</text>
        <dbReference type="Rhea" id="RHEA:79907"/>
        <dbReference type="ChEBI" id="CHEBI:15378"/>
        <dbReference type="ChEBI" id="CHEBI:58052"/>
        <dbReference type="ChEBI" id="CHEBI:58223"/>
        <dbReference type="ChEBI" id="CHEBI:77768"/>
        <dbReference type="ChEBI" id="CHEBI:229786"/>
    </reaction>
    <physiologicalReaction direction="left-to-right" evidence="36">
        <dbReference type="Rhea" id="RHEA:79908"/>
    </physiologicalReaction>
</comment>
<comment type="catalytic activity">
    <reaction evidence="19">
        <text>5-epi-5-F2t-IsoP + UDP-alpha-D-glucuronate = 5-epi-5-F2t-IsoP-glucuronide + UDP + H(+)</text>
        <dbReference type="Rhea" id="RHEA:79911"/>
        <dbReference type="ChEBI" id="CHEBI:15378"/>
        <dbReference type="ChEBI" id="CHEBI:58052"/>
        <dbReference type="ChEBI" id="CHEBI:58223"/>
        <dbReference type="ChEBI" id="CHEBI:229787"/>
        <dbReference type="ChEBI" id="CHEBI:229788"/>
    </reaction>
    <physiologicalReaction direction="left-to-right" evidence="36">
        <dbReference type="Rhea" id="RHEA:79912"/>
    </physiologicalReaction>
</comment>
<comment type="catalytic activity">
    <reaction evidence="5">
        <text>(5Z,8Z,11Z,14Z)-eicosatetraenoate + UDP-alpha-D-glucuronate = O-[(5Z),(8Z),(11Z),(14Z)-eicosatetraenoyl]-beta-D-glucuronate + UDP</text>
        <dbReference type="Rhea" id="RHEA:79915"/>
        <dbReference type="ChEBI" id="CHEBI:32395"/>
        <dbReference type="ChEBI" id="CHEBI:58052"/>
        <dbReference type="ChEBI" id="CHEBI:58223"/>
        <dbReference type="ChEBI" id="CHEBI:231327"/>
    </reaction>
    <physiologicalReaction direction="left-to-right" evidence="24">
        <dbReference type="Rhea" id="RHEA:79916"/>
    </physiologicalReaction>
</comment>
<comment type="catalytic activity">
    <reaction evidence="5">
        <text>15-hydroxy-(5Z,8Z,11Z,13E)-eicosatetraenoate + UDP-alpha-D-glucuronate = 15-O-(beta-D-glucuronosyl)-(5Z,8Z,11Z,14Z)-eicosatetraenoate + UDP + H(+)</text>
        <dbReference type="Rhea" id="RHEA:79919"/>
        <dbReference type="ChEBI" id="CHEBI:15378"/>
        <dbReference type="ChEBI" id="CHEBI:58052"/>
        <dbReference type="ChEBI" id="CHEBI:58223"/>
        <dbReference type="ChEBI" id="CHEBI:78832"/>
        <dbReference type="ChEBI" id="CHEBI:231329"/>
    </reaction>
    <physiologicalReaction direction="left-to-right" evidence="24">
        <dbReference type="Rhea" id="RHEA:79920"/>
    </physiologicalReaction>
</comment>
<comment type="catalytic activity">
    <reaction evidence="5">
        <text>20-hydroxy-(5Z,8Z,11Z,14Z)-eicosatetraenoate + UDP-alpha-D-glucuronate = 20-O-(beta-D-glucuronosyl)-(5Z,8Z,11Z,14Z)-eicosatetraenoate + UDP + H(+)</text>
        <dbReference type="Rhea" id="RHEA:79927"/>
        <dbReference type="ChEBI" id="CHEBI:15378"/>
        <dbReference type="ChEBI" id="CHEBI:58052"/>
        <dbReference type="ChEBI" id="CHEBI:58223"/>
        <dbReference type="ChEBI" id="CHEBI:76624"/>
        <dbReference type="ChEBI" id="CHEBI:231328"/>
    </reaction>
    <physiologicalReaction direction="left-to-right" evidence="24">
        <dbReference type="Rhea" id="RHEA:79928"/>
    </physiologicalReaction>
</comment>
<comment type="catalytic activity">
    <reaction evidence="14">
        <text>(E)-ferulate + UDP-alpha-D-glucuronate = (E)-4-O-(beta-D-glucuronosyl)-ferulate + UDP + H(+)</text>
        <dbReference type="Rhea" id="RHEA:79951"/>
        <dbReference type="ChEBI" id="CHEBI:15378"/>
        <dbReference type="ChEBI" id="CHEBI:29749"/>
        <dbReference type="ChEBI" id="CHEBI:58052"/>
        <dbReference type="ChEBI" id="CHEBI:58223"/>
        <dbReference type="ChEBI" id="CHEBI:231331"/>
    </reaction>
    <physiologicalReaction direction="left-to-right" evidence="32">
        <dbReference type="Rhea" id="RHEA:79952"/>
    </physiologicalReaction>
</comment>
<comment type="catalytic activity">
    <reaction evidence="5">
        <text>prostaglandin B1 + UDP-alpha-D-glucuronate = 15-O-(beta-D-glucuronosyl)-prostaglandin B1 + UDP + H(+)</text>
        <dbReference type="Rhea" id="RHEA:79935"/>
        <dbReference type="ChEBI" id="CHEBI:15378"/>
        <dbReference type="ChEBI" id="CHEBI:58052"/>
        <dbReference type="ChEBI" id="CHEBI:58223"/>
        <dbReference type="ChEBI" id="CHEBI:133393"/>
        <dbReference type="ChEBI" id="CHEBI:231330"/>
    </reaction>
    <physiologicalReaction direction="left-to-right" evidence="24">
        <dbReference type="Rhea" id="RHEA:79936"/>
    </physiologicalReaction>
</comment>
<comment type="catalytic activity">
    <reaction evidence="6">
        <text>mycophenolate + UDP-alpha-D-glucuronate = mycophenolic acid O-acyl-beta-D-glucuronide + UDP</text>
        <dbReference type="Rhea" id="RHEA:63700"/>
        <dbReference type="ChEBI" id="CHEBI:58052"/>
        <dbReference type="ChEBI" id="CHEBI:58223"/>
        <dbReference type="ChEBI" id="CHEBI:62932"/>
        <dbReference type="ChEBI" id="CHEBI:66982"/>
    </reaction>
    <physiologicalReaction direction="left-to-right" evidence="25">
        <dbReference type="Rhea" id="RHEA:63701"/>
    </physiologicalReaction>
</comment>
<comment type="catalytic activity">
    <reaction evidence="10">
        <text>losartan + UDP-alpha-D-glucuronate = losartan-2-N-beta-D-glucuronide + UDP</text>
        <dbReference type="Rhea" id="RHEA:63720"/>
        <dbReference type="ChEBI" id="CHEBI:58052"/>
        <dbReference type="ChEBI" id="CHEBI:58223"/>
        <dbReference type="ChEBI" id="CHEBI:149504"/>
        <dbReference type="ChEBI" id="CHEBI:149507"/>
    </reaction>
    <physiologicalReaction direction="left-to-right" evidence="29">
        <dbReference type="Rhea" id="RHEA:63721"/>
    </physiologicalReaction>
</comment>
<comment type="catalytic activity">
    <reaction evidence="10">
        <text>candesartan + UDP-alpha-D-glucuronate = candesartan O-beta-D-glucuronoside + UDP</text>
        <dbReference type="Rhea" id="RHEA:63724"/>
        <dbReference type="ChEBI" id="CHEBI:58052"/>
        <dbReference type="ChEBI" id="CHEBI:58223"/>
        <dbReference type="ChEBI" id="CHEBI:149509"/>
        <dbReference type="ChEBI" id="CHEBI:149522"/>
    </reaction>
    <physiologicalReaction direction="left-to-right" evidence="29">
        <dbReference type="Rhea" id="RHEA:63725"/>
    </physiologicalReaction>
</comment>
<comment type="catalytic activity">
    <reaction evidence="10">
        <text>candesartan + UDP-alpha-D-glucuronate = candesartan-2-N-beta-D-glucuronide + UDP</text>
        <dbReference type="Rhea" id="RHEA:63728"/>
        <dbReference type="ChEBI" id="CHEBI:58052"/>
        <dbReference type="ChEBI" id="CHEBI:58223"/>
        <dbReference type="ChEBI" id="CHEBI:149509"/>
        <dbReference type="ChEBI" id="CHEBI:149523"/>
    </reaction>
    <physiologicalReaction direction="left-to-right" evidence="29">
        <dbReference type="Rhea" id="RHEA:63729"/>
    </physiologicalReaction>
</comment>
<comment type="catalytic activity">
    <reaction evidence="10">
        <text>zolasartan + UDP-alpha-D-glucuronate = zolarsartan O-beta-D-glucuronoside + UDP</text>
        <dbReference type="Rhea" id="RHEA:63732"/>
        <dbReference type="ChEBI" id="CHEBI:58052"/>
        <dbReference type="ChEBI" id="CHEBI:58223"/>
        <dbReference type="ChEBI" id="CHEBI:149524"/>
        <dbReference type="ChEBI" id="CHEBI:149526"/>
    </reaction>
    <physiologicalReaction direction="left-to-right" evidence="29">
        <dbReference type="Rhea" id="RHEA:63733"/>
    </physiologicalReaction>
</comment>
<comment type="biophysicochemical properties">
    <kinetics>
        <KM evidence="7">10 uM for 17beta-estradiol/estradiol (when assaying glucuronidation at position 17)</KM>
        <KM evidence="7">33 uM for the formation of 2-hydroxy-17beta-estradiol (when assaying glucuronidation at position 2)</KM>
        <KM evidence="7">33 uM for 2-hydroxy-17beta-estradiol (when assaying glucuronidation at position 3)</KM>
        <KM evidence="7">22 uM for 4-hydroxy-17beta-estradiol (when assaying glucuronidation at position 3)</KM>
        <KM evidence="7">10 uM for 4-hydroxy-17beta-estradiol (when assaying glucuronidation at position 4)</KM>
        <KM evidence="7">62 uM for 4-hydroxy-estrone (when assaying glucuronidation at position 4)</KM>
        <KM evidence="18">3.4 uM for 16alpha-hydroxyestrone (when assaying glucuronidation at position 16)</KM>
        <KM evidence="11">5.96 uM for 17beta-estradiol/estradiol (when assaying glucuronidation at position 17)</KM>
        <KM evidence="12">1.7 uM for epitestosterone (when assaying glucuronidation at position 17)</KM>
        <KM evidence="3">1.3 uM for all-trans-retinoate</KM>
        <KM evidence="3">221 uM for all-trans-4-hydroxyretinoate</KM>
        <KM evidence="5">161 uM for (5Z,8Z,11Z,14Z)-eicosatetraenoate</KM>
        <KM evidence="5">64.2 uM for 15-hydroxy-(5Z,8Z,11Z,13E)-eicosatetraenoate</KM>
        <KM evidence="5">48.4 uM for 20-hydroxy-(5Z,8Z,11Z,14Z)-eicosatetraenoate</KM>
        <KM evidence="5">162 uM for prostaglandin B1</KM>
        <KM evidence="5">216 uM for prostaglandin E2</KM>
        <KM evidence="14">6320 uM for (E)-ferulate (when assaying glucuronidation at the phenolic group)</KM>
        <KM evidence="14">6900 uM for (E)-ferulate (when assaying glucuronidation at the carboxylic acid group)</KM>
        <KM evidence="6">200 uM for mycophenolate (when assaying glucuronidation at position 6')</KM>
        <KM evidence="10">162.3 uM for losartan</KM>
        <KM evidence="9">4.2 uM for calcitriol (when assaying glucuronidation at position 25)</KM>
        <Vmax evidence="7">42.0 pmol/min/mg enzyme for the formation of 17beta-estradiol 17-O-(beta-D-glucuronate)</Vmax>
        <Vmax evidence="7">14.0 pmol/min/mg enzyme for the formation of 2-hydroxy-17beta-estradiol 2-O-(beta-D-glucuronate)</Vmax>
        <Vmax evidence="7">372.0 pmol/min/mg enzyme for the formation of 2-hydroxy-17beta-estradiol 3-O-(beta-D-glucuronate)</Vmax>
        <Vmax evidence="7">48.0 pmol/min/mg enzyme for the formation of 4-hydroxy-17beta-estradiol 3-O-(beta-D-glucuronate)</Vmax>
        <Vmax evidence="7">523.0 pmol/min/mg enzyme for the formation of 4-hydroxy-17beta-estradiol 4-O-(beta-D-glucuronate)</Vmax>
        <Vmax evidence="7">872.0 pmol/min/mg enzyme for the formation of 4-hydroxy-estrone 4-O-(beta-D-glucuronate)</Vmax>
        <Vmax evidence="18">190.0 pmol/min/mg enzyme for the formation of 16alpha-hydroxyestrone 16-O-(beta-D-glucuronate)</Vmax>
        <Vmax evidence="11">590.0 pmol/min/mg enzyme for the formation of 17alpha-estradiol 17-O-(beta-D-glucuronate)</Vmax>
        <Vmax evidence="11">631.0 pmol/min/mg enzyme for the formation of 17beta-estradiol 17-O-(beta-D-glucuronate)</Vmax>
        <Vmax evidence="16">32.6 pmol/min/mg enzyme for the formation of 17alpha-estradiol 17-O-(beta-D-glucuronate)</Vmax>
        <Vmax evidence="16">4.5 pmol/min/mg enzyme for the formation of 17beta-estradiol 17-O-(beta-D-glucuronate)</Vmax>
        <Vmax evidence="16">1198.0 pmol/min/mg enzyme for the formation of 16alpha,17beta-estriol 16-O-(beta-D-glucuronate)</Vmax>
        <Vmax evidence="16">2717.0 pmol/min/mg enzyme for the formation of 16beta,17beta-estriol 16-O-(beta-D-glucuronate)</Vmax>
        <Vmax evidence="16">35.2 pmol/min/mg enzyme for the formation of 16alpha,17alpha-estriol 16-O-(beta-D-glucuronate)</Vmax>
        <Vmax evidence="16">1537.0 pmol/min/mg enzyme for the formation of 16alpha,17alpha-estriol 17-O-(beta-D-glucuronate)</Vmax>
        <Vmax evidence="12">337.0 pmol/min/mg enzyme for the formation of epitestosterone 17-O-(beta-D-glucuronate)</Vmax>
        <Vmax evidence="3">523.0 pmol/min/mg enzyme for the formation of all-trans-retinoate 1-O-(beta-D-glucuronate)</Vmax>
        <Vmax evidence="3">1709.0 pmol/min/mg enzyme for the formation of 4-hydroxy-4-O-(beta-D-glucuronide)-all-trans-retinoate</Vmax>
        <Vmax evidence="5">2500.0 pmol/min/mg enzyme for the formation of O-[(5Z),(8Z),(11Z),(14Z)-eicosatetraenoyl]-beta-D-glucuronate</Vmax>
        <Vmax evidence="5">500.0 pmol/min/mg enzyme for the formation of 15-O-(beta-D-glucuronosyl)-(5Z,8Z,11Z,14Z)-eicosatetraenoate</Vmax>
        <Vmax evidence="5">900.0 pmol/min/mg enzyme for the formation of 20-O-(beta-D-glucuronosyl)-(5Z,8Z,11Z,14Z)-eicosatetraenoate</Vmax>
        <Vmax evidence="5">800.0 pmol/min/mg enzyme for the formation of 15-O-(beta-D-glucuronosyl)-prostaglandin B1</Vmax>
        <Vmax evidence="5">1200.0 pmol/min/mg enzyme with prostaglandin E2 as substrate</Vmax>
        <Vmax evidence="14">314.8 pmol/min/mg enzyme for the formation of (E)-4-O-(beta-D-glucuronosyl)-ferulate</Vmax>
        <Vmax evidence="14">9.4 pmol/min/mg enzyme for the formation of (E)-ferulic acid beta-D-glucuronate ester</Vmax>
        <Vmax evidence="7">220.0 pmol/min/mg enzyme for the formation of mycophenolic acid O-acyl-glucuronide</Vmax>
        <Vmax evidence="10">16.1 pmol/min/mg enzyme for the formation of losartan-N2-beta-D-glucuronide</Vmax>
        <Vmax evidence="9">1.4 pmol/min/mg enzyme for the formation of calcitriol 25-O-(beta-D-glucuronate)</Vmax>
        <text evidence="25 28">Some kinetic parameters were assessed using commercial enzymes, which may represent a mix of both active and inactive protein forms, and therefore modify the kinetic values.</text>
    </kinetics>
</comment>
<comment type="subcellular location">
    <subcellularLocation>
        <location evidence="3">Endoplasmic reticulum membrane</location>
        <topology evidence="2">Single-pass membrane protein</topology>
    </subcellularLocation>
</comment>
<comment type="polymorphism">
    <text evidence="4 15">2 alleles have been identified: UGT2B7*1 (His-268) and UGT2B7*2 (Tyr-268). The sequence shown is that of allele UGT2B7*2.</text>
</comment>
<comment type="similarity">
    <text evidence="22">Belongs to the UDP-glycosyltransferase family.</text>
</comment>
<name>UD2B7_HUMAN</name>
<reference key="1">
    <citation type="journal article" date="1990" name="J. Biol. Chem.">
        <title>Cloning and expression of human liver UDP-glucuronosyltransferase in COS-1 cells. 3,4-catechol estrogens and estriol as primary substrates.</title>
        <authorList>
            <person name="Ritter J.K."/>
            <person name="Sheen Y.Y."/>
            <person name="Owens I.S."/>
        </authorList>
    </citation>
    <scope>NUCLEOTIDE SEQUENCE [MRNA]</scope>
    <scope>VARIANT HIS-268</scope>
    <source>
        <tissue>Liver</tissue>
    </source>
</reference>
<reference key="2">
    <citation type="journal article" date="2004" name="Nat. Genet.">
        <title>Complete sequencing and characterization of 21,243 full-length human cDNAs.</title>
        <authorList>
            <person name="Ota T."/>
            <person name="Suzuki Y."/>
            <person name="Nishikawa T."/>
            <person name="Otsuki T."/>
            <person name="Sugiyama T."/>
            <person name="Irie R."/>
            <person name="Wakamatsu A."/>
            <person name="Hayashi K."/>
            <person name="Sato H."/>
            <person name="Nagai K."/>
            <person name="Kimura K."/>
            <person name="Makita H."/>
            <person name="Sekine M."/>
            <person name="Obayashi M."/>
            <person name="Nishi T."/>
            <person name="Shibahara T."/>
            <person name="Tanaka T."/>
            <person name="Ishii S."/>
            <person name="Yamamoto J."/>
            <person name="Saito K."/>
            <person name="Kawai Y."/>
            <person name="Isono Y."/>
            <person name="Nakamura Y."/>
            <person name="Nagahari K."/>
            <person name="Murakami K."/>
            <person name="Yasuda T."/>
            <person name="Iwayanagi T."/>
            <person name="Wagatsuma M."/>
            <person name="Shiratori A."/>
            <person name="Sudo H."/>
            <person name="Hosoiri T."/>
            <person name="Kaku Y."/>
            <person name="Kodaira H."/>
            <person name="Kondo H."/>
            <person name="Sugawara M."/>
            <person name="Takahashi M."/>
            <person name="Kanda K."/>
            <person name="Yokoi T."/>
            <person name="Furuya T."/>
            <person name="Kikkawa E."/>
            <person name="Omura Y."/>
            <person name="Abe K."/>
            <person name="Kamihara K."/>
            <person name="Katsuta N."/>
            <person name="Sato K."/>
            <person name="Tanikawa M."/>
            <person name="Yamazaki M."/>
            <person name="Ninomiya K."/>
            <person name="Ishibashi T."/>
            <person name="Yamashita H."/>
            <person name="Murakawa K."/>
            <person name="Fujimori K."/>
            <person name="Tanai H."/>
            <person name="Kimata M."/>
            <person name="Watanabe M."/>
            <person name="Hiraoka S."/>
            <person name="Chiba Y."/>
            <person name="Ishida S."/>
            <person name="Ono Y."/>
            <person name="Takiguchi S."/>
            <person name="Watanabe S."/>
            <person name="Yosida M."/>
            <person name="Hotuta T."/>
            <person name="Kusano J."/>
            <person name="Kanehori K."/>
            <person name="Takahashi-Fujii A."/>
            <person name="Hara H."/>
            <person name="Tanase T.-O."/>
            <person name="Nomura Y."/>
            <person name="Togiya S."/>
            <person name="Komai F."/>
            <person name="Hara R."/>
            <person name="Takeuchi K."/>
            <person name="Arita M."/>
            <person name="Imose N."/>
            <person name="Musashino K."/>
            <person name="Yuuki H."/>
            <person name="Oshima A."/>
            <person name="Sasaki N."/>
            <person name="Aotsuka S."/>
            <person name="Yoshikawa Y."/>
            <person name="Matsunawa H."/>
            <person name="Ichihara T."/>
            <person name="Shiohata N."/>
            <person name="Sano S."/>
            <person name="Moriya S."/>
            <person name="Momiyama H."/>
            <person name="Satoh N."/>
            <person name="Takami S."/>
            <person name="Terashima Y."/>
            <person name="Suzuki O."/>
            <person name="Nakagawa S."/>
            <person name="Senoh A."/>
            <person name="Mizoguchi H."/>
            <person name="Goto Y."/>
            <person name="Shimizu F."/>
            <person name="Wakebe H."/>
            <person name="Hishigaki H."/>
            <person name="Watanabe T."/>
            <person name="Sugiyama A."/>
            <person name="Takemoto M."/>
            <person name="Kawakami B."/>
            <person name="Yamazaki M."/>
            <person name="Watanabe K."/>
            <person name="Kumagai A."/>
            <person name="Itakura S."/>
            <person name="Fukuzumi Y."/>
            <person name="Fujimori Y."/>
            <person name="Komiyama M."/>
            <person name="Tashiro H."/>
            <person name="Tanigami A."/>
            <person name="Fujiwara T."/>
            <person name="Ono T."/>
            <person name="Yamada K."/>
            <person name="Fujii Y."/>
            <person name="Ozaki K."/>
            <person name="Hirao M."/>
            <person name="Ohmori Y."/>
            <person name="Kawabata A."/>
            <person name="Hikiji T."/>
            <person name="Kobatake N."/>
            <person name="Inagaki H."/>
            <person name="Ikema Y."/>
            <person name="Okamoto S."/>
            <person name="Okitani R."/>
            <person name="Kawakami T."/>
            <person name="Noguchi S."/>
            <person name="Itoh T."/>
            <person name="Shigeta K."/>
            <person name="Senba T."/>
            <person name="Matsumura K."/>
            <person name="Nakajima Y."/>
            <person name="Mizuno T."/>
            <person name="Morinaga M."/>
            <person name="Sasaki M."/>
            <person name="Togashi T."/>
            <person name="Oyama M."/>
            <person name="Hata H."/>
            <person name="Watanabe M."/>
            <person name="Komatsu T."/>
            <person name="Mizushima-Sugano J."/>
            <person name="Satoh T."/>
            <person name="Shirai Y."/>
            <person name="Takahashi Y."/>
            <person name="Nakagawa K."/>
            <person name="Okumura K."/>
            <person name="Nagase T."/>
            <person name="Nomura N."/>
            <person name="Kikuchi H."/>
            <person name="Masuho Y."/>
            <person name="Yamashita R."/>
            <person name="Nakai K."/>
            <person name="Yada T."/>
            <person name="Nakamura Y."/>
            <person name="Ohara O."/>
            <person name="Isogai T."/>
            <person name="Sugano S."/>
        </authorList>
    </citation>
    <scope>NUCLEOTIDE SEQUENCE [LARGE SCALE MRNA]</scope>
    <source>
        <tissue>Kidney</tissue>
    </source>
</reference>
<reference key="3">
    <citation type="submission" date="2005-04" db="EMBL/GenBank/DDBJ databases">
        <authorList>
            <person name="Suzuki Y."/>
            <person name="Sugano S."/>
            <person name="Totoki Y."/>
            <person name="Toyoda A."/>
            <person name="Takeda T."/>
            <person name="Sakaki Y."/>
            <person name="Tanaka A."/>
            <person name="Yokoyama S."/>
        </authorList>
    </citation>
    <scope>NUCLEOTIDE SEQUENCE [LARGE SCALE MRNA]</scope>
    <source>
        <tissue>Kidney</tissue>
    </source>
</reference>
<reference key="4">
    <citation type="journal article" date="2005" name="Nature">
        <title>Generation and annotation of the DNA sequences of human chromosomes 2 and 4.</title>
        <authorList>
            <person name="Hillier L.W."/>
            <person name="Graves T.A."/>
            <person name="Fulton R.S."/>
            <person name="Fulton L.A."/>
            <person name="Pepin K.H."/>
            <person name="Minx P."/>
            <person name="Wagner-McPherson C."/>
            <person name="Layman D."/>
            <person name="Wylie K."/>
            <person name="Sekhon M."/>
            <person name="Becker M.C."/>
            <person name="Fewell G.A."/>
            <person name="Delehaunty K.D."/>
            <person name="Miner T.L."/>
            <person name="Nash W.E."/>
            <person name="Kremitzki C."/>
            <person name="Oddy L."/>
            <person name="Du H."/>
            <person name="Sun H."/>
            <person name="Bradshaw-Cordum H."/>
            <person name="Ali J."/>
            <person name="Carter J."/>
            <person name="Cordes M."/>
            <person name="Harris A."/>
            <person name="Isak A."/>
            <person name="van Brunt A."/>
            <person name="Nguyen C."/>
            <person name="Du F."/>
            <person name="Courtney L."/>
            <person name="Kalicki J."/>
            <person name="Ozersky P."/>
            <person name="Abbott S."/>
            <person name="Armstrong J."/>
            <person name="Belter E.A."/>
            <person name="Caruso L."/>
            <person name="Cedroni M."/>
            <person name="Cotton M."/>
            <person name="Davidson T."/>
            <person name="Desai A."/>
            <person name="Elliott G."/>
            <person name="Erb T."/>
            <person name="Fronick C."/>
            <person name="Gaige T."/>
            <person name="Haakenson W."/>
            <person name="Haglund K."/>
            <person name="Holmes A."/>
            <person name="Harkins R."/>
            <person name="Kim K."/>
            <person name="Kruchowski S.S."/>
            <person name="Strong C.M."/>
            <person name="Grewal N."/>
            <person name="Goyea E."/>
            <person name="Hou S."/>
            <person name="Levy A."/>
            <person name="Martinka S."/>
            <person name="Mead K."/>
            <person name="McLellan M.D."/>
            <person name="Meyer R."/>
            <person name="Randall-Maher J."/>
            <person name="Tomlinson C."/>
            <person name="Dauphin-Kohlberg S."/>
            <person name="Kozlowicz-Reilly A."/>
            <person name="Shah N."/>
            <person name="Swearengen-Shahid S."/>
            <person name="Snider J."/>
            <person name="Strong J.T."/>
            <person name="Thompson J."/>
            <person name="Yoakum M."/>
            <person name="Leonard S."/>
            <person name="Pearman C."/>
            <person name="Trani L."/>
            <person name="Radionenko M."/>
            <person name="Waligorski J.E."/>
            <person name="Wang C."/>
            <person name="Rock S.M."/>
            <person name="Tin-Wollam A.-M."/>
            <person name="Maupin R."/>
            <person name="Latreille P."/>
            <person name="Wendl M.C."/>
            <person name="Yang S.-P."/>
            <person name="Pohl C."/>
            <person name="Wallis J.W."/>
            <person name="Spieth J."/>
            <person name="Bieri T.A."/>
            <person name="Berkowicz N."/>
            <person name="Nelson J.O."/>
            <person name="Osborne J."/>
            <person name="Ding L."/>
            <person name="Meyer R."/>
            <person name="Sabo A."/>
            <person name="Shotland Y."/>
            <person name="Sinha P."/>
            <person name="Wohldmann P.E."/>
            <person name="Cook L.L."/>
            <person name="Hickenbotham M.T."/>
            <person name="Eldred J."/>
            <person name="Williams D."/>
            <person name="Jones T.A."/>
            <person name="She X."/>
            <person name="Ciccarelli F.D."/>
            <person name="Izaurralde E."/>
            <person name="Taylor J."/>
            <person name="Schmutz J."/>
            <person name="Myers R.M."/>
            <person name="Cox D.R."/>
            <person name="Huang X."/>
            <person name="McPherson J.D."/>
            <person name="Mardis E.R."/>
            <person name="Clifton S.W."/>
            <person name="Warren W.C."/>
            <person name="Chinwalla A.T."/>
            <person name="Eddy S.R."/>
            <person name="Marra M.A."/>
            <person name="Ovcharenko I."/>
            <person name="Furey T.S."/>
            <person name="Miller W."/>
            <person name="Eichler E.E."/>
            <person name="Bork P."/>
            <person name="Suyama M."/>
            <person name="Torrents D."/>
            <person name="Waterston R.H."/>
            <person name="Wilson R.K."/>
        </authorList>
    </citation>
    <scope>NUCLEOTIDE SEQUENCE [LARGE SCALE GENOMIC DNA]</scope>
</reference>
<reference key="5">
    <citation type="journal article" date="2004" name="Genome Res.">
        <title>The status, quality, and expansion of the NIH full-length cDNA project: the Mammalian Gene Collection (MGC).</title>
        <authorList>
            <consortium name="The MGC Project Team"/>
        </authorList>
    </citation>
    <scope>NUCLEOTIDE SEQUENCE [LARGE SCALE MRNA]</scope>
    <source>
        <tissue>Kidney</tissue>
    </source>
</reference>
<reference key="6">
    <citation type="journal article" date="2009" name="J. Proteome Res.">
        <title>Glycoproteomics analysis of human liver tissue by combination of multiple enzyme digestion and hydrazide chemistry.</title>
        <authorList>
            <person name="Chen R."/>
            <person name="Jiang X."/>
            <person name="Sun D."/>
            <person name="Han G."/>
            <person name="Wang F."/>
            <person name="Ye M."/>
            <person name="Wang L."/>
            <person name="Zou H."/>
        </authorList>
    </citation>
    <scope>GLYCOSYLATION [LARGE SCALE ANALYSIS] AT ASN-68</scope>
    <source>
        <tissue>Liver</tissue>
    </source>
</reference>
<reference key="7">
    <citation type="journal article" date="2014" name="J. Proteomics">
        <title>An enzyme assisted RP-RPLC approach for in-depth analysis of human liver phosphoproteome.</title>
        <authorList>
            <person name="Bian Y."/>
            <person name="Song C."/>
            <person name="Cheng K."/>
            <person name="Dong M."/>
            <person name="Wang F."/>
            <person name="Huang J."/>
            <person name="Sun D."/>
            <person name="Wang L."/>
            <person name="Ye M."/>
            <person name="Zou H."/>
        </authorList>
    </citation>
    <scope>IDENTIFICATION BY MASS SPECTROMETRY [LARGE SCALE ANALYSIS]</scope>
    <source>
        <tissue>Liver</tissue>
    </source>
</reference>
<reference key="8">
    <citation type="journal article" date="2000" name="J. Biol. Chem.">
        <title>4-hydroxyretinoic acid, a novel substrate for human liver microsomal UDP-glucuronosyltransferase(s) and recombinant UGT2B7.</title>
        <authorList>
            <person name="Samokyszyn V.M."/>
            <person name="Gall W.E."/>
            <person name="Zawada G."/>
            <person name="Freyaldenhoven M.A."/>
            <person name="Chen G."/>
            <person name="Mackenzie P.I."/>
            <person name="Tephly T.R."/>
            <person name="Radominska-Pandya A."/>
        </authorList>
    </citation>
    <scope>FUNCTION</scope>
    <scope>CATALYTIC ACTIVITY</scope>
    <scope>BIOPHYSICOCHEMICAL PROPERTIES</scope>
    <scope>SUBCELLULAR LOCATION</scope>
</reference>
<reference key="9">
    <citation type="journal article" date="2004" name="J. Clin. Endocrinol. Metab.">
        <title>Specificity and regioselectivity of the conjugation of estradiol, estrone, and their catecholestrogen and methoxyestrogen metabolites by human uridine diphospho-glucuronosyltransferases expressed in endometrium.</title>
        <authorList>
            <person name="Lepine J."/>
            <person name="Bernard O."/>
            <person name="Plante M."/>
            <person name="Tetu B."/>
            <person name="Pelletier G."/>
            <person name="Labrie F."/>
            <person name="Belanger A."/>
            <person name="Guillemette C."/>
        </authorList>
    </citation>
    <scope>FUNCTION</scope>
    <scope>CATALYTIC ACTIVITY</scope>
    <scope>BIOPHYSICOCHEMICAL PROPERTIES</scope>
</reference>
<reference key="10">
    <citation type="journal article" date="2004" name="J. Lipid Res.">
        <title>Glucuronidation of oxidized fatty acids and prostaglandins B1 and E2 by human hepatic and recombinant UDP-glucuronosyltransferases.</title>
        <authorList>
            <person name="Little J.M."/>
            <person name="Kurkela M."/>
            <person name="Sonka J."/>
            <person name="Jaentti S."/>
            <person name="Ketola R."/>
            <person name="Bratton S."/>
            <person name="Finel M."/>
            <person name="Radominska-Pandya A."/>
        </authorList>
    </citation>
    <scope>FUNCTION</scope>
    <scope>CATALYTIC ACTIVITY</scope>
    <scope>BIOPHYSICOCHEMICAL PROPERTIES</scope>
</reference>
<reference key="11">
    <citation type="journal article" date="2005" name="Drug Metab. Dispos.">
        <title>Identification of the UDP-glucuronosyltransferase isoforms involved in mycophenolic acid phase II metabolism.</title>
        <authorList>
            <person name="Picard N."/>
            <person name="Ratanasavanh D."/>
            <person name="Premaud A."/>
            <person name="Le Meur Y."/>
            <person name="Marquet P."/>
        </authorList>
    </citation>
    <scope>FUNCTION</scope>
    <scope>CATALYTIC ACTIVITY</scope>
    <scope>BIOPHYSICOCHEMICAL PROPERTIES</scope>
</reference>
<reference key="12">
    <citation type="journal article" date="2008" name="Biochem. Pharmacol.">
        <title>The human UDP-glucuronosyltransferase UGT1A3 is highly selective towards N2 in the tetrazole ring of losartan, candesartan, and zolarsartan.</title>
        <authorList>
            <person name="Alonen A."/>
            <person name="Finel M."/>
            <person name="Kostiainen R."/>
        </authorList>
    </citation>
    <scope>FUNCTION</scope>
    <scope>CATALYTIC ACTIVITY</scope>
    <scope>BIOPHYSICOCHEMICAL PROPERTIES</scope>
</reference>
<reference key="13">
    <citation type="journal article" date="2008" name="Biochem. Pharmacol.">
        <title>Identification of human UDP-glucuronosyltransferases catalyzing hepatic 1alpha,25-dihydroxyvitamin D3 conjugation.</title>
        <authorList>
            <person name="Hashizume T."/>
            <person name="Xu Y."/>
            <person name="Mohutsky M.A."/>
            <person name="Alberts J."/>
            <person name="Hadden C."/>
            <person name="Kalhorn T.F."/>
            <person name="Isoherranen N."/>
            <person name="Shuhart M.C."/>
            <person name="Thummel K.E."/>
        </authorList>
    </citation>
    <scope>BIOPHYSICOCHEMICAL PROPERTIES</scope>
</reference>
<reference key="14">
    <citation type="journal article" date="2008" name="Drug Metab. Dispos.">
        <title>The configuration of the 17-hydroxy group variably influences the glucuronidation of beta-estradiol and epiestradiol by human UDP-glucuronosyltransferases.</title>
        <authorList>
            <person name="Itaeaho K."/>
            <person name="Mackenzie P.I."/>
            <person name="Ikushiro S."/>
            <person name="Miners J.O."/>
            <person name="Finel M."/>
        </authorList>
    </citation>
    <scope>FUNCTION</scope>
    <scope>CATALYTIC ACTIVITY</scope>
    <scope>BIOPHYSICOCHEMICAL PROPERTIES</scope>
</reference>
<reference key="15">
    <citation type="journal article" date="2009" name="Drug Metab. Dispos.">
        <title>UDP-glucuronosyltransferases (UGTs) 2B7 and UGT2B17 display converse specificity in testosterone and epitestosterone glucuronidation, whereas UGT2A1 conjugates both androgens similarly.</title>
        <authorList>
            <person name="Sten T."/>
            <person name="Bichlmaier I."/>
            <person name="Kuuranne T."/>
            <person name="Leinonen A."/>
            <person name="Yli-Kauhaluoma J."/>
            <person name="Finel M."/>
        </authorList>
    </citation>
    <scope>FUNCTION</scope>
    <scope>CATALYTIC ACTIVITY</scope>
    <scope>BIOPHYSICOCHEMICAL PROPERTIES</scope>
</reference>
<reference key="16">
    <citation type="journal article" date="2011" name="Drug Metab. Pharmacokinet.">
        <title>Identification of the human UDP-glucuronosyltransferase isoforms involved in the glucuronidation of the phytochemical ferulic acid.</title>
        <authorList>
            <person name="Li X."/>
            <person name="Shang L."/>
            <person name="Wu Y."/>
            <person name="Abbas S."/>
            <person name="Li D."/>
            <person name="Netter P."/>
            <person name="Ouzzine M."/>
            <person name="Wang H."/>
            <person name="Magdalou J."/>
        </authorList>
    </citation>
    <scope>FUNCTION</scope>
    <scope>CATALYTIC ACTIVITY</scope>
    <scope>BIOPHYSICOCHEMICAL PROPERTIES</scope>
</reference>
<reference key="17">
    <citation type="journal article" date="2013" name="Drug Metab. Dispos.">
        <title>Regiospecificity and stereospecificity of human UDP-glucuronosyltransferases in the glucuronidation of estriol, 16-epiestriol, 17-epiestriol, and 13-epiestradiol.</title>
        <authorList>
            <person name="Sneitz N."/>
            <person name="Vahermo M."/>
            <person name="Mosorin J."/>
            <person name="Laakkonen L."/>
            <person name="Poirier D."/>
            <person name="Finel M."/>
        </authorList>
    </citation>
    <scope>FUNCTION</scope>
    <scope>CATALYTIC ACTIVITY</scope>
    <scope>BIOPHYSICOCHEMICAL PROPERTIES</scope>
    <scope>SUBSTRATE SPECIFICITY</scope>
</reference>
<reference key="18">
    <citation type="journal article" date="2013" name="Drug Metab. Dispos.">
        <title>The Human UDP-glucuronosyltransferase UGT2A1 and UGT2A2 enzymes are highly active in bile acid glucuronidation.</title>
        <authorList>
            <person name="Perreault M."/>
            <person name="Gauthier-Landry L."/>
            <person name="Trottier J."/>
            <person name="Verreault M."/>
            <person name="Caron P."/>
            <person name="Finel M."/>
            <person name="Barbier O."/>
        </authorList>
    </citation>
    <scope>FUNCTION</scope>
    <scope>CATALYTIC ACTIVITY</scope>
</reference>
<reference key="19">
    <citation type="journal article" date="2015" name="J. Steroid Biochem. Mol. Biol.">
        <title>Glucuronidation of estrone and 16alpha-hydroxyestrone by human UGT enzymes: The key roles of UGT1A10 and UGT2B7.</title>
        <authorList>
            <person name="Kallionpaeae R.A."/>
            <person name="Jaervinen E."/>
            <person name="Finel M."/>
        </authorList>
    </citation>
    <scope>FUNCTION</scope>
    <scope>CATALYTIC ACTIVITY</scope>
    <scope>BIOPHYSICOCHEMICAL PROPERTIES</scope>
</reference>
<reference key="20">
    <citation type="journal article" date="2024" name="Redox Biol.">
        <title>Identification of novel F2-isoprostane metabolites by specific UDP-glucuronosyltransferases.</title>
        <authorList>
            <person name="Milne G.L."/>
            <person name="Nogueira M.S."/>
            <person name="Gao B."/>
            <person name="Sanchez S.C."/>
            <person name="Amin W."/>
            <person name="Thomas S."/>
            <person name="Oger C."/>
            <person name="Galano J.M."/>
            <person name="Murff H.J."/>
            <person name="Yang G."/>
            <person name="Durand T."/>
        </authorList>
    </citation>
    <scope>FUNCTION</scope>
    <scope>CATALYTIC ACTIVITY</scope>
</reference>
<reference key="21">
    <citation type="journal article" date="2007" name="J. Mol. Biol.">
        <title>Crystal structure of the cofactor-binding domain of the human phase II drug-metabolism enzyme UDP-glucuronosyltransferase 2B7.</title>
        <authorList>
            <person name="Miley M.J."/>
            <person name="Zielinska A.K."/>
            <person name="Keenan J.E."/>
            <person name="Bratton S.M."/>
            <person name="Radominska-Pandya A."/>
            <person name="Redinbo M.R."/>
        </authorList>
    </citation>
    <scope>X-RAY CRYSTALLOGRAPHY (1.8 ANGSTROMS) OF 285-451</scope>
    <scope>CATALYTIC ACTIVITY</scope>
    <scope>FUNCTION TOWARDS STEROIDS</scope>
    <scope>MUTAGENESIS OF SER-15; HIS-35; ASP-151; THR-373; HIS-374; ASN-378; GLY-379; ASP-398 AND GLN-399</scope>
</reference>
<reference key="22">
    <citation type="journal article" date="2000" name="Pharmacogenetics">
        <title>Genetic polymorphism of UDP-glucuronosyltransferase 2B7 (UGT2B7) at amino acid 268: ethnic diversity of alleles and potential clinical significance.</title>
        <authorList>
            <person name="Bhasker C.R."/>
            <person name="McKinnon W."/>
            <person name="Stone A."/>
            <person name="Lo A.C."/>
            <person name="Kubota T."/>
            <person name="Ishizaki T."/>
            <person name="Miners J.O."/>
        </authorList>
    </citation>
    <scope>VARIANT HIS-268</scope>
</reference>
<dbReference type="EC" id="2.4.1.17" evidence="8 10 11 12 16 17 18"/>
<dbReference type="EMBL" id="J05428">
    <property type="protein sequence ID" value="AAA36793.1"/>
    <property type="molecule type" value="mRNA"/>
</dbReference>
<dbReference type="EMBL" id="AK313190">
    <property type="protein sequence ID" value="BAG36007.1"/>
    <property type="molecule type" value="mRNA"/>
</dbReference>
<dbReference type="EMBL" id="AK223142">
    <property type="protein sequence ID" value="BAD96862.1"/>
    <property type="molecule type" value="mRNA"/>
</dbReference>
<dbReference type="EMBL" id="AC111000">
    <property type="protein sequence ID" value="AAY41045.1"/>
    <property type="molecule type" value="Genomic_DNA"/>
</dbReference>
<dbReference type="EMBL" id="BC030974">
    <property type="protein sequence ID" value="AAH30974.1"/>
    <property type="molecule type" value="mRNA"/>
</dbReference>
<dbReference type="CCDS" id="CCDS3526.1"/>
<dbReference type="PIR" id="A35366">
    <property type="entry name" value="A35366"/>
</dbReference>
<dbReference type="RefSeq" id="NP_001065.2">
    <property type="nucleotide sequence ID" value="NM_001074.4"/>
</dbReference>
<dbReference type="RefSeq" id="NP_001317648.1">
    <property type="nucleotide sequence ID" value="NM_001330719.1"/>
</dbReference>
<dbReference type="PDB" id="2O6L">
    <property type="method" value="X-ray"/>
    <property type="resolution" value="1.80 A"/>
    <property type="chains" value="A/B=285-451"/>
</dbReference>
<dbReference type="PDBsum" id="2O6L"/>
<dbReference type="SMR" id="P16662"/>
<dbReference type="BioGRID" id="113211">
    <property type="interactions" value="3"/>
</dbReference>
<dbReference type="ComplexPortal" id="CPX-8557">
    <property type="entry name" value="UDP-glucuronosyltransferase 1A1 complex, UGT1A1-1-UGT2B7 variant"/>
</dbReference>
<dbReference type="ComplexPortal" id="CPX-8562">
    <property type="entry name" value="UDP-glucuronosyltransferase 1A1 complex, UGT1A9-UTG2B7 variant"/>
</dbReference>
<dbReference type="ComplexPortal" id="CPX-8563">
    <property type="entry name" value="UDP-glucuronosyltransferase 1A1 complex, UGT1A1-2-UGT2B7 variant"/>
</dbReference>
<dbReference type="FunCoup" id="P16662">
    <property type="interactions" value="427"/>
</dbReference>
<dbReference type="IntAct" id="P16662">
    <property type="interactions" value="44"/>
</dbReference>
<dbReference type="STRING" id="9606.ENSP00000304811"/>
<dbReference type="BindingDB" id="P16662"/>
<dbReference type="ChEMBL" id="CHEMBL4370"/>
<dbReference type="DrugBank" id="DB13783">
    <property type="generic name" value="Acemetacin"/>
</dbReference>
<dbReference type="DrugBank" id="DB06403">
    <property type="generic name" value="Ambrisentan"/>
</dbReference>
<dbReference type="DrugBank" id="DB01217">
    <property type="generic name" value="Anastrozole"/>
</dbReference>
<dbReference type="DrugBank" id="DB00714">
    <property type="generic name" value="Apomorphine"/>
</dbReference>
<dbReference type="DrugBank" id="DB15059">
    <property type="generic name" value="Aprocitentan"/>
</dbReference>
<dbReference type="DrugBank" id="DB11638">
    <property type="generic name" value="Artenimol"/>
</dbReference>
<dbReference type="DrugBank" id="DB09274">
    <property type="generic name" value="Artesunate"/>
</dbReference>
<dbReference type="DrugBank" id="DB12597">
    <property type="generic name" value="Asciminib"/>
</dbReference>
<dbReference type="DrugBank" id="DB11936">
    <property type="generic name" value="Bempedoic acid"/>
</dbReference>
<dbReference type="DrugBank" id="DB09061">
    <property type="generic name" value="Cannabidiol"/>
</dbReference>
<dbReference type="DrugBank" id="DB14737">
    <property type="generic name" value="Cannabinol"/>
</dbReference>
<dbReference type="DrugBank" id="DB12218">
    <property type="generic name" value="Capivasertib"/>
</dbReference>
<dbReference type="DrugBank" id="DB00564">
    <property type="generic name" value="Carbamazepine"/>
</dbReference>
<dbReference type="DrugBank" id="DB01136">
    <property type="generic name" value="Carvedilol"/>
</dbReference>
<dbReference type="DrugBank" id="DB06119">
    <property type="generic name" value="Cenobamate"/>
</dbReference>
<dbReference type="DrugBank" id="DB06777">
    <property type="generic name" value="Chenodeoxycholic acid"/>
</dbReference>
<dbReference type="DrugBank" id="DB05239">
    <property type="generic name" value="Cobimetinib"/>
</dbReference>
<dbReference type="DrugBank" id="DB00318">
    <property type="generic name" value="Codeine"/>
</dbReference>
<dbReference type="DrugBank" id="DB14635">
    <property type="generic name" value="Curcumin sulfate"/>
</dbReference>
<dbReference type="DrugBank" id="DB06695">
    <property type="generic name" value="Dabigatran etexilate"/>
</dbReference>
<dbReference type="DrugBank" id="DB06292">
    <property type="generic name" value="Dapagliflozin"/>
</dbReference>
<dbReference type="DrugBank" id="DB09213">
    <property type="generic name" value="Dexibuprofen"/>
</dbReference>
<dbReference type="DrugBank" id="DB00514">
    <property type="generic name" value="Dextromethorphan"/>
</dbReference>
<dbReference type="DrugBank" id="DB00586">
    <property type="generic name" value="Diclofenac"/>
</dbReference>
<dbReference type="DrugBank" id="DB05928">
    <property type="generic name" value="Dovitinib"/>
</dbReference>
<dbReference type="DrugBank" id="DB12243">
    <property type="generic name" value="Edaravone"/>
</dbReference>
<dbReference type="DrugBank" id="DB05187">
    <property type="generic name" value="Elafibranor"/>
</dbReference>
<dbReference type="DrugBank" id="DB11979">
    <property type="generic name" value="Elagolix"/>
</dbReference>
<dbReference type="DrugBank" id="DB09038">
    <property type="generic name" value="Empagliflozin"/>
</dbReference>
<dbReference type="DrugBank" id="DB13874">
    <property type="generic name" value="Enasidenib"/>
</dbReference>
<dbReference type="DrugBank" id="DB00445">
    <property type="generic name" value="Epirubicin"/>
</dbReference>
<dbReference type="DrugBank" id="DB11827">
    <property type="generic name" value="Ertugliflozin"/>
</dbReference>
<dbReference type="DrugBank" id="DB12235">
    <property type="generic name" value="Estetrol"/>
</dbReference>
<dbReference type="DrugBank" id="DB00783">
    <property type="generic name" value="Estradiol"/>
</dbReference>
<dbReference type="DrugBank" id="DB00977">
    <property type="generic name" value="Ethinylestradiol"/>
</dbReference>
<dbReference type="DrugBank" id="DB00749">
    <property type="generic name" value="Etodolac"/>
</dbReference>
<dbReference type="DrugBank" id="DB00973">
    <property type="generic name" value="Ezetimibe"/>
</dbReference>
<dbReference type="DrugBank" id="DB04854">
    <property type="generic name" value="Febuxostat"/>
</dbReference>
<dbReference type="DrugBank" id="DB01544">
    <property type="generic name" value="Flunitrazepam"/>
</dbReference>
<dbReference type="DrugBank" id="DB00712">
    <property type="generic name" value="Flurbiprofen"/>
</dbReference>
<dbReference type="DrugBank" id="DB01095">
    <property type="generic name" value="Fluvastatin"/>
</dbReference>
<dbReference type="DrugBank" id="DB00983">
    <property type="generic name" value="Formoterol"/>
</dbReference>
<dbReference type="DrugBank" id="DB11796">
    <property type="generic name" value="Fostemsavir"/>
</dbReference>
<dbReference type="DrugBank" id="DB01241">
    <property type="generic name" value="Gemfibrozil"/>
</dbReference>
<dbReference type="DrugBank" id="DB00327">
    <property type="generic name" value="Hydromorphone"/>
</dbReference>
<dbReference type="DrugBank" id="DB12471">
    <property type="generic name" value="Ibrexafungerp"/>
</dbReference>
<dbReference type="DrugBank" id="DB01050">
    <property type="generic name" value="Ibuprofen"/>
</dbReference>
<dbReference type="DrugBank" id="DB00328">
    <property type="generic name" value="Indomethacin"/>
</dbReference>
<dbReference type="DrugBank" id="DB01026">
    <property type="generic name" value="Ketoconazole"/>
</dbReference>
<dbReference type="DrugBank" id="DB00465">
    <property type="generic name" value="Ketorolac"/>
</dbReference>
<dbReference type="DrugBank" id="DB00598">
    <property type="generic name" value="Labetalol"/>
</dbReference>
<dbReference type="DrugBank" id="DB00555">
    <property type="generic name" value="Lamotrigine"/>
</dbReference>
<dbReference type="DrugBank" id="DB01006">
    <property type="generic name" value="Letrozole"/>
</dbReference>
<dbReference type="DrugBank" id="DB00678">
    <property type="generic name" value="Losartan"/>
</dbReference>
<dbReference type="DrugBank" id="DB00227">
    <property type="generic name" value="Lovastatin"/>
</dbReference>
<dbReference type="DrugBank" id="DB09212">
    <property type="generic name" value="Loxoprofen"/>
</dbReference>
<dbReference type="DrugBank" id="DB14009">
    <property type="generic name" value="Medical Cannabis"/>
</dbReference>
<dbReference type="DrugBank" id="DB00784">
    <property type="generic name" value="Mefenamic acid"/>
</dbReference>
<dbReference type="DrugBank" id="DB00683">
    <property type="generic name" value="Midazolam"/>
</dbReference>
<dbReference type="DrugBank" id="DB05018">
    <property type="generic name" value="Migalastat"/>
</dbReference>
<dbReference type="DrugBank" id="DB08893">
    <property type="generic name" value="Mirabegron"/>
</dbReference>
<dbReference type="DrugBank" id="DB01252">
    <property type="generic name" value="Mitiglinide"/>
</dbReference>
<dbReference type="DrugBank" id="DB00295">
    <property type="generic name" value="Morphine"/>
</dbReference>
<dbReference type="DrugBank" id="DB00688">
    <property type="generic name" value="Mycophenolate mofetil"/>
</dbReference>
<dbReference type="DrugBank" id="DB01024">
    <property type="generic name" value="Mycophenolic acid"/>
</dbReference>
<dbReference type="DrugBank" id="DB06230">
    <property type="generic name" value="Nalmefene"/>
</dbReference>
<dbReference type="DrugBank" id="DB08804">
    <property type="generic name" value="Nandrolone decanoate"/>
</dbReference>
<dbReference type="DrugBank" id="DB00788">
    <property type="generic name" value="Naproxen"/>
</dbReference>
<dbReference type="DrugBank" id="DB11837">
    <property type="generic name" value="Osilodrostat"/>
</dbReference>
<dbReference type="DrugBank" id="DB00842">
    <property type="generic name" value="Oxazepam"/>
</dbReference>
<dbReference type="DrugBank" id="DB01174">
    <property type="generic name" value="Phenobarbital"/>
</dbReference>
<dbReference type="DrugBank" id="DB00960">
    <property type="generic name" value="Pindolol"/>
</dbReference>
<dbReference type="DrugBank" id="DB08860">
    <property type="generic name" value="Pitavastatin"/>
</dbReference>
<dbReference type="DrugBank" id="DB12016">
    <property type="generic name" value="Ponesimod"/>
</dbReference>
<dbReference type="DrugBank" id="DB00794">
    <property type="generic name" value="Primidone"/>
</dbReference>
<dbReference type="DrugBank" id="DB00503">
    <property type="generic name" value="Ritonavir"/>
</dbReference>
<dbReference type="DrugBank" id="DB06207">
    <property type="generic name" value="Silodosin"/>
</dbReference>
<dbReference type="DrugBank" id="DB00641">
    <property type="generic name" value="Simvastatin"/>
</dbReference>
<dbReference type="DrugBank" id="DB12713">
    <property type="generic name" value="Sotagliflozin"/>
</dbReference>
<dbReference type="DrugBank" id="DB00870">
    <property type="generic name" value="Suprofen"/>
</dbReference>
<dbReference type="DrugBank" id="DB00675">
    <property type="generic name" value="Tamoxifen"/>
</dbReference>
<dbReference type="DrugBank" id="DB06204">
    <property type="generic name" value="Tapentadol"/>
</dbReference>
<dbReference type="DrugBank" id="DB12095">
    <property type="generic name" value="Telotristat ethyl"/>
</dbReference>
<dbReference type="DrugBank" id="DB00871">
    <property type="generic name" value="Terbutaline"/>
</dbReference>
<dbReference type="DrugBank" id="DB00755">
    <property type="generic name" value="Tretinoin"/>
</dbReference>
<dbReference type="DrugBank" id="DB06045">
    <property type="generic name" value="Trofinetide"/>
</dbReference>
<dbReference type="DrugBank" id="DB00197">
    <property type="generic name" value="Troglitazone"/>
</dbReference>
<dbReference type="DrugBank" id="DB13609">
    <property type="generic name" value="Umifenovir"/>
</dbReference>
<dbReference type="DrugBank" id="DB12255">
    <property type="generic name" value="Vadadustat"/>
</dbReference>
<dbReference type="DrugBank" id="DB06235">
    <property type="generic name" value="Vadimezan"/>
</dbReference>
<dbReference type="DrugBank" id="DB00313">
    <property type="generic name" value="Valproic acid"/>
</dbReference>
<dbReference type="DrugBank" id="DB15114">
    <property type="generic name" value="Vamorolone"/>
</dbReference>
<dbReference type="DrugBank" id="DB06737">
    <property type="generic name" value="Zaltoprofen"/>
</dbReference>
<dbReference type="DrugBank" id="DB00495">
    <property type="generic name" value="Zidovudine"/>
</dbReference>
<dbReference type="SwissLipids" id="SLP:000001695"/>
<dbReference type="CAZy" id="GT1">
    <property type="family name" value="Glycosyltransferase Family 1"/>
</dbReference>
<dbReference type="GlyCosmos" id="P16662">
    <property type="glycosylation" value="3 sites, No reported glycans"/>
</dbReference>
<dbReference type="GlyGen" id="P16662">
    <property type="glycosylation" value="3 sites, 52 N-linked glycans (2 sites)"/>
</dbReference>
<dbReference type="iPTMnet" id="P16662"/>
<dbReference type="PhosphoSitePlus" id="P16662"/>
<dbReference type="BioMuta" id="UGT2B7"/>
<dbReference type="DMDM" id="136727"/>
<dbReference type="jPOST" id="P16662"/>
<dbReference type="MassIVE" id="P16662"/>
<dbReference type="PaxDb" id="9606-ENSP00000304811"/>
<dbReference type="PeptideAtlas" id="P16662"/>
<dbReference type="ProteomicsDB" id="53391"/>
<dbReference type="Antibodypedia" id="44203">
    <property type="antibodies" value="177 antibodies from 27 providers"/>
</dbReference>
<dbReference type="DNASU" id="7364"/>
<dbReference type="Ensembl" id="ENST00000305231.12">
    <property type="protein sequence ID" value="ENSP00000304811.7"/>
    <property type="gene ID" value="ENSG00000171234.14"/>
</dbReference>
<dbReference type="GeneID" id="7364"/>
<dbReference type="KEGG" id="hsa:7364"/>
<dbReference type="MANE-Select" id="ENST00000305231.12">
    <property type="protein sequence ID" value="ENSP00000304811.7"/>
    <property type="RefSeq nucleotide sequence ID" value="NM_001074.4"/>
    <property type="RefSeq protein sequence ID" value="NP_001065.2"/>
</dbReference>
<dbReference type="UCSC" id="uc003heg.4">
    <property type="organism name" value="human"/>
</dbReference>
<dbReference type="AGR" id="HGNC:12554"/>
<dbReference type="CTD" id="7364"/>
<dbReference type="DisGeNET" id="7364"/>
<dbReference type="GeneCards" id="UGT2B7"/>
<dbReference type="HGNC" id="HGNC:12554">
    <property type="gene designation" value="UGT2B7"/>
</dbReference>
<dbReference type="HPA" id="ENSG00000171234">
    <property type="expression patterns" value="Group enriched (kidney, liver)"/>
</dbReference>
<dbReference type="MIM" id="600068">
    <property type="type" value="gene"/>
</dbReference>
<dbReference type="neXtProt" id="NX_P16662"/>
<dbReference type="OpenTargets" id="ENSG00000171234"/>
<dbReference type="PharmGKB" id="PA361"/>
<dbReference type="VEuPathDB" id="HostDB:ENSG00000171234"/>
<dbReference type="eggNOG" id="KOG1192">
    <property type="taxonomic scope" value="Eukaryota"/>
</dbReference>
<dbReference type="GeneTree" id="ENSGT00940000158332"/>
<dbReference type="HOGENOM" id="CLU_012949_3_2_1"/>
<dbReference type="InParanoid" id="P16662"/>
<dbReference type="OMA" id="KLDFNTM"/>
<dbReference type="OrthoDB" id="5835829at2759"/>
<dbReference type="PAN-GO" id="P16662">
    <property type="GO annotations" value="3 GO annotations based on evolutionary models"/>
</dbReference>
<dbReference type="PhylomeDB" id="P16662"/>
<dbReference type="TreeFam" id="TF315472"/>
<dbReference type="BioCyc" id="MetaCyc:HS10272-MONOMER"/>
<dbReference type="BRENDA" id="2.4.1.17">
    <property type="organism ID" value="2681"/>
</dbReference>
<dbReference type="PathwayCommons" id="P16662"/>
<dbReference type="Reactome" id="R-HSA-156588">
    <property type="pathway name" value="Glucuronidation"/>
</dbReference>
<dbReference type="Reactome" id="R-HSA-9749641">
    <property type="pathway name" value="Aspirin ADME"/>
</dbReference>
<dbReference type="Reactome" id="R-HSA-9757110">
    <property type="pathway name" value="Prednisone ADME"/>
</dbReference>
<dbReference type="SABIO-RK" id="P16662"/>
<dbReference type="SignaLink" id="P16662"/>
<dbReference type="SIGNOR" id="P16662"/>
<dbReference type="BioGRID-ORCS" id="7364">
    <property type="hits" value="9 hits in 1056 CRISPR screens"/>
</dbReference>
<dbReference type="ChiTaRS" id="UGT2B7">
    <property type="organism name" value="human"/>
</dbReference>
<dbReference type="EvolutionaryTrace" id="P16662"/>
<dbReference type="GeneWiki" id="UGT2B7"/>
<dbReference type="GenomeRNAi" id="7364"/>
<dbReference type="Pharos" id="P16662">
    <property type="development level" value="Tchem"/>
</dbReference>
<dbReference type="PRO" id="PR:P16662"/>
<dbReference type="Proteomes" id="UP000005640">
    <property type="component" value="Chromosome 4"/>
</dbReference>
<dbReference type="RNAct" id="P16662">
    <property type="molecule type" value="protein"/>
</dbReference>
<dbReference type="Bgee" id="ENSG00000171234">
    <property type="expression patterns" value="Expressed in liver and 65 other cell types or tissues"/>
</dbReference>
<dbReference type="ExpressionAtlas" id="P16662">
    <property type="expression patterns" value="baseline and differential"/>
</dbReference>
<dbReference type="GO" id="GO:0005789">
    <property type="term" value="C:endoplasmic reticulum membrane"/>
    <property type="evidence" value="ECO:0000304"/>
    <property type="project" value="Reactome"/>
</dbReference>
<dbReference type="GO" id="GO:0016020">
    <property type="term" value="C:membrane"/>
    <property type="evidence" value="ECO:0000304"/>
    <property type="project" value="ProtInc"/>
</dbReference>
<dbReference type="GO" id="GO:0015020">
    <property type="term" value="F:glucuronosyltransferase activity"/>
    <property type="evidence" value="ECO:0000314"/>
    <property type="project" value="UniProtKB"/>
</dbReference>
<dbReference type="GO" id="GO:0008209">
    <property type="term" value="P:androgen metabolic process"/>
    <property type="evidence" value="ECO:0000314"/>
    <property type="project" value="UniProtKB"/>
</dbReference>
<dbReference type="GO" id="GO:0008210">
    <property type="term" value="P:estrogen metabolic process"/>
    <property type="evidence" value="ECO:0000314"/>
    <property type="project" value="UniProtKB"/>
</dbReference>
<dbReference type="GO" id="GO:0006629">
    <property type="term" value="P:lipid metabolic process"/>
    <property type="evidence" value="ECO:0000304"/>
    <property type="project" value="ProtInc"/>
</dbReference>
<dbReference type="GO" id="GO:0006805">
    <property type="term" value="P:xenobiotic metabolic process"/>
    <property type="evidence" value="ECO:0000314"/>
    <property type="project" value="BHF-UCL"/>
</dbReference>
<dbReference type="CDD" id="cd03784">
    <property type="entry name" value="GT1_Gtf-like"/>
    <property type="match status" value="1"/>
</dbReference>
<dbReference type="FunFam" id="3.40.50.2000:FF:000001">
    <property type="entry name" value="UDP-glucuronosyltransferase"/>
    <property type="match status" value="1"/>
</dbReference>
<dbReference type="FunFam" id="3.40.50.2000:FF:000081">
    <property type="entry name" value="UDP-glucuronosyltransferase 2A2"/>
    <property type="match status" value="1"/>
</dbReference>
<dbReference type="Gene3D" id="3.40.50.2000">
    <property type="entry name" value="Glycogen Phosphorylase B"/>
    <property type="match status" value="2"/>
</dbReference>
<dbReference type="InterPro" id="IPR050271">
    <property type="entry name" value="UDP-glycosyltransferase"/>
</dbReference>
<dbReference type="InterPro" id="IPR002213">
    <property type="entry name" value="UDP_glucos_trans"/>
</dbReference>
<dbReference type="InterPro" id="IPR035595">
    <property type="entry name" value="UDP_glycos_trans_CS"/>
</dbReference>
<dbReference type="PANTHER" id="PTHR48043">
    <property type="entry name" value="EG:EG0003.4 PROTEIN-RELATED"/>
    <property type="match status" value="1"/>
</dbReference>
<dbReference type="PANTHER" id="PTHR48043:SF87">
    <property type="entry name" value="UDP-GLUCURONOSYLTRANSFERASE 2B7"/>
    <property type="match status" value="1"/>
</dbReference>
<dbReference type="Pfam" id="PF00201">
    <property type="entry name" value="UDPGT"/>
    <property type="match status" value="1"/>
</dbReference>
<dbReference type="SUPFAM" id="SSF53756">
    <property type="entry name" value="UDP-Glycosyltransferase/glycogen phosphorylase"/>
    <property type="match status" value="1"/>
</dbReference>
<dbReference type="PROSITE" id="PS00375">
    <property type="entry name" value="UDPGT"/>
    <property type="match status" value="1"/>
</dbReference>
<organism>
    <name type="scientific">Homo sapiens</name>
    <name type="common">Human</name>
    <dbReference type="NCBI Taxonomy" id="9606"/>
    <lineage>
        <taxon>Eukaryota</taxon>
        <taxon>Metazoa</taxon>
        <taxon>Chordata</taxon>
        <taxon>Craniata</taxon>
        <taxon>Vertebrata</taxon>
        <taxon>Euteleostomi</taxon>
        <taxon>Mammalia</taxon>
        <taxon>Eutheria</taxon>
        <taxon>Euarchontoglires</taxon>
        <taxon>Primates</taxon>
        <taxon>Haplorrhini</taxon>
        <taxon>Catarrhini</taxon>
        <taxon>Hominidae</taxon>
        <taxon>Homo</taxon>
    </lineage>
</organism>